<sequence length="339" mass="37633">MKGVTIHNFCYSYFKVCLLVMSLAYGSAEWDGSSSQIAKTIIVNPNDARYFKTVQSAIDSIPLQNQDWIRILISNGIYSEKVTIPRGKGYIYMQGGGIEKTIIAYGDHQLTNTSATFTSYPSNIIITGITFKNKYNIASSSSPTKPAVAAMMLGDKYAIIDSSFDGFQDTLYDDYGRHYYKRCVISGGIDFIFGGAQSIFEGCTLKLRVGIYPPNEVYGTITAQGRDSPTDKGGFVFKDCTVMGSGKALLGRAWKSYSRVIFYRSMFSDNILPIGWDAWKAKGQEGHITFVEFGCTGVGADTSKRVPWLTKASEKDVLQFTNLTFIDEEGWLSRLPIKF</sequence>
<proteinExistence type="evidence at transcript level"/>
<keyword id="KW-0063">Aspartyl esterase</keyword>
<keyword id="KW-0134">Cell wall</keyword>
<keyword id="KW-0961">Cell wall biogenesis/degradation</keyword>
<keyword id="KW-0325">Glycoprotein</keyword>
<keyword id="KW-0378">Hydrolase</keyword>
<keyword id="KW-1185">Reference proteome</keyword>
<keyword id="KW-0964">Secreted</keyword>
<keyword id="KW-0732">Signal</keyword>
<accession>O64479</accession>
<protein>
    <recommendedName>
        <fullName>Putative pectinesterase 10</fullName>
        <shortName>PE 10</shortName>
        <ecNumber>3.1.1.11</ecNumber>
    </recommendedName>
    <alternativeName>
        <fullName>Pectin methylesterase 10</fullName>
        <shortName>AtPME10</shortName>
    </alternativeName>
</protein>
<reference key="1">
    <citation type="journal article" date="1999" name="Nature">
        <title>Sequence and analysis of chromosome 2 of the plant Arabidopsis thaliana.</title>
        <authorList>
            <person name="Lin X."/>
            <person name="Kaul S."/>
            <person name="Rounsley S.D."/>
            <person name="Shea T.P."/>
            <person name="Benito M.-I."/>
            <person name="Town C.D."/>
            <person name="Fujii C.Y."/>
            <person name="Mason T.M."/>
            <person name="Bowman C.L."/>
            <person name="Barnstead M.E."/>
            <person name="Feldblyum T.V."/>
            <person name="Buell C.R."/>
            <person name="Ketchum K.A."/>
            <person name="Lee J.J."/>
            <person name="Ronning C.M."/>
            <person name="Koo H.L."/>
            <person name="Moffat K.S."/>
            <person name="Cronin L.A."/>
            <person name="Shen M."/>
            <person name="Pai G."/>
            <person name="Van Aken S."/>
            <person name="Umayam L."/>
            <person name="Tallon L.J."/>
            <person name="Gill J.E."/>
            <person name="Adams M.D."/>
            <person name="Carrera A.J."/>
            <person name="Creasy T.H."/>
            <person name="Goodman H.M."/>
            <person name="Somerville C.R."/>
            <person name="Copenhaver G.P."/>
            <person name="Preuss D."/>
            <person name="Nierman W.C."/>
            <person name="White O."/>
            <person name="Eisen J.A."/>
            <person name="Salzberg S.L."/>
            <person name="Fraser C.M."/>
            <person name="Venter J.C."/>
        </authorList>
    </citation>
    <scope>NUCLEOTIDE SEQUENCE [LARGE SCALE GENOMIC DNA]</scope>
    <source>
        <strain>cv. Columbia</strain>
    </source>
</reference>
<reference key="2">
    <citation type="journal article" date="2017" name="Plant J.">
        <title>Araport11: a complete reannotation of the Arabidopsis thaliana reference genome.</title>
        <authorList>
            <person name="Cheng C.Y."/>
            <person name="Krishnakumar V."/>
            <person name="Chan A.P."/>
            <person name="Thibaud-Nissen F."/>
            <person name="Schobel S."/>
            <person name="Town C.D."/>
        </authorList>
    </citation>
    <scope>GENOME REANNOTATION</scope>
    <source>
        <strain>cv. Columbia</strain>
    </source>
</reference>
<reference key="3">
    <citation type="journal article" date="2004" name="Carbohydr. Res.">
        <title>Pectin methylesterases: sequence-structural features and phylogenetic relationships.</title>
        <authorList>
            <person name="Markovic O."/>
            <person name="Janecek S."/>
        </authorList>
    </citation>
    <scope>GENE FAMILY</scope>
    <scope>NOMENCLATURE</scope>
</reference>
<reference key="4">
    <citation type="journal article" date="2006" name="Planta">
        <title>Comprehensive expression profiling of the pectin methylesterase gene family during silique development in Arabidopsis thaliana.</title>
        <authorList>
            <person name="Louvet R."/>
            <person name="Cavel E."/>
            <person name="Gutierrez L."/>
            <person name="Guenin S."/>
            <person name="Roger D."/>
            <person name="Gillet F."/>
            <person name="Guerineau F."/>
            <person name="Pelloux J."/>
        </authorList>
    </citation>
    <scope>TISSUE SPECIFICITY</scope>
    <scope>DEVELOPMENTAL STAGE</scope>
</reference>
<feature type="signal peptide" evidence="2">
    <location>
        <begin position="1"/>
        <end position="28"/>
    </location>
</feature>
<feature type="chain" id="PRO_0000371667" description="Putative pectinesterase 10">
    <location>
        <begin position="29"/>
        <end position="339"/>
    </location>
</feature>
<feature type="active site" description="Proton donor" evidence="1">
    <location>
        <position position="169"/>
    </location>
</feature>
<feature type="active site" description="Nucleophile" evidence="1">
    <location>
        <position position="190"/>
    </location>
</feature>
<feature type="binding site" evidence="1">
    <location>
        <position position="116"/>
    </location>
    <ligand>
        <name>substrate</name>
    </ligand>
</feature>
<feature type="binding site" evidence="1">
    <location>
        <position position="252"/>
    </location>
    <ligand>
        <name>substrate</name>
    </ligand>
</feature>
<feature type="binding site" evidence="1">
    <location>
        <position position="254"/>
    </location>
    <ligand>
        <name>substrate</name>
    </ligand>
</feature>
<feature type="site" description="Transition state stabilizer" evidence="1">
    <location>
        <position position="168"/>
    </location>
</feature>
<feature type="glycosylation site" description="N-linked (GlcNAc...) asparagine" evidence="2">
    <location>
        <position position="112"/>
    </location>
</feature>
<feature type="glycosylation site" description="N-linked (GlcNAc...) asparagine" evidence="2">
    <location>
        <position position="322"/>
    </location>
</feature>
<gene>
    <name type="primary">PME10</name>
    <name type="synonym">ARATH10</name>
    <name type="ordered locus">At2g19150</name>
    <name type="ORF">T20K24.17</name>
</gene>
<dbReference type="EC" id="3.1.1.11"/>
<dbReference type="EMBL" id="AC002392">
    <property type="protein sequence ID" value="AAD12032.1"/>
    <property type="molecule type" value="Genomic_DNA"/>
</dbReference>
<dbReference type="EMBL" id="CP002685">
    <property type="protein sequence ID" value="AEC06852.1"/>
    <property type="molecule type" value="Genomic_DNA"/>
</dbReference>
<dbReference type="PIR" id="T00536">
    <property type="entry name" value="T00536"/>
</dbReference>
<dbReference type="RefSeq" id="NP_179505.1">
    <property type="nucleotide sequence ID" value="NM_127472.2"/>
</dbReference>
<dbReference type="SMR" id="O64479"/>
<dbReference type="FunCoup" id="O64479">
    <property type="interactions" value="56"/>
</dbReference>
<dbReference type="STRING" id="3702.O64479"/>
<dbReference type="GlyCosmos" id="O64479">
    <property type="glycosylation" value="2 sites, No reported glycans"/>
</dbReference>
<dbReference type="GlyGen" id="O64479">
    <property type="glycosylation" value="2 sites"/>
</dbReference>
<dbReference type="PaxDb" id="3702-AT2G19150.1"/>
<dbReference type="EnsemblPlants" id="AT2G19150.1">
    <property type="protein sequence ID" value="AT2G19150.1"/>
    <property type="gene ID" value="AT2G19150"/>
</dbReference>
<dbReference type="GeneID" id="816432"/>
<dbReference type="Gramene" id="AT2G19150.1">
    <property type="protein sequence ID" value="AT2G19150.1"/>
    <property type="gene ID" value="AT2G19150"/>
</dbReference>
<dbReference type="KEGG" id="ath:AT2G19150"/>
<dbReference type="Araport" id="AT2G19150"/>
<dbReference type="TAIR" id="AT2G19150"/>
<dbReference type="eggNOG" id="ENOG502QVK0">
    <property type="taxonomic scope" value="Eukaryota"/>
</dbReference>
<dbReference type="HOGENOM" id="CLU_012243_3_0_1"/>
<dbReference type="InParanoid" id="O64479"/>
<dbReference type="OMA" id="LESECTG"/>
<dbReference type="OrthoDB" id="2019149at2759"/>
<dbReference type="PhylomeDB" id="O64479"/>
<dbReference type="BioCyc" id="ARA:AT2G19150-MONOMER"/>
<dbReference type="UniPathway" id="UPA00545">
    <property type="reaction ID" value="UER00823"/>
</dbReference>
<dbReference type="PRO" id="PR:O64479"/>
<dbReference type="Proteomes" id="UP000006548">
    <property type="component" value="Chromosome 2"/>
</dbReference>
<dbReference type="ExpressionAtlas" id="O64479">
    <property type="expression patterns" value="baseline and differential"/>
</dbReference>
<dbReference type="GO" id="GO:0005576">
    <property type="term" value="C:extracellular region"/>
    <property type="evidence" value="ECO:0007669"/>
    <property type="project" value="UniProtKB-KW"/>
</dbReference>
<dbReference type="GO" id="GO:0030599">
    <property type="term" value="F:pectinesterase activity"/>
    <property type="evidence" value="ECO:0007669"/>
    <property type="project" value="UniProtKB-EC"/>
</dbReference>
<dbReference type="GO" id="GO:0042545">
    <property type="term" value="P:cell wall modification"/>
    <property type="evidence" value="ECO:0007669"/>
    <property type="project" value="InterPro"/>
</dbReference>
<dbReference type="GO" id="GO:0045490">
    <property type="term" value="P:pectin catabolic process"/>
    <property type="evidence" value="ECO:0007669"/>
    <property type="project" value="UniProtKB-UniPathway"/>
</dbReference>
<dbReference type="FunFam" id="2.160.20.10:FF:000013">
    <property type="entry name" value="Pectinesterase"/>
    <property type="match status" value="1"/>
</dbReference>
<dbReference type="Gene3D" id="2.160.20.10">
    <property type="entry name" value="Single-stranded right-handed beta-helix, Pectin lyase-like"/>
    <property type="match status" value="1"/>
</dbReference>
<dbReference type="InterPro" id="IPR012334">
    <property type="entry name" value="Pectin_lyas_fold"/>
</dbReference>
<dbReference type="InterPro" id="IPR011050">
    <property type="entry name" value="Pectin_lyase_fold/virulence"/>
</dbReference>
<dbReference type="InterPro" id="IPR000070">
    <property type="entry name" value="Pectinesterase_cat"/>
</dbReference>
<dbReference type="PANTHER" id="PTHR31321">
    <property type="entry name" value="ACYL-COA THIOESTER HYDROLASE YBHC-RELATED"/>
    <property type="match status" value="1"/>
</dbReference>
<dbReference type="PANTHER" id="PTHR31321:SF76">
    <property type="entry name" value="PECTINESTERASE 10-RELATED"/>
    <property type="match status" value="1"/>
</dbReference>
<dbReference type="Pfam" id="PF01095">
    <property type="entry name" value="Pectinesterase"/>
    <property type="match status" value="1"/>
</dbReference>
<dbReference type="SUPFAM" id="SSF51126">
    <property type="entry name" value="Pectin lyase-like"/>
    <property type="match status" value="1"/>
</dbReference>
<evidence type="ECO:0000250" key="1"/>
<evidence type="ECO:0000255" key="2"/>
<evidence type="ECO:0000269" key="3">
    <source>
    </source>
</evidence>
<evidence type="ECO:0000305" key="4"/>
<name>PME10_ARATH</name>
<comment type="function">
    <text evidence="1">Acts in the modification of cell walls via demethylesterification of cell wall pectin.</text>
</comment>
<comment type="catalytic activity">
    <reaction>
        <text>[(1-&gt;4)-alpha-D-galacturonosyl methyl ester](n) + n H2O = [(1-&gt;4)-alpha-D-galacturonosyl](n) + n methanol + n H(+)</text>
        <dbReference type="Rhea" id="RHEA:22380"/>
        <dbReference type="Rhea" id="RHEA-COMP:14570"/>
        <dbReference type="Rhea" id="RHEA-COMP:14573"/>
        <dbReference type="ChEBI" id="CHEBI:15377"/>
        <dbReference type="ChEBI" id="CHEBI:15378"/>
        <dbReference type="ChEBI" id="CHEBI:17790"/>
        <dbReference type="ChEBI" id="CHEBI:140522"/>
        <dbReference type="ChEBI" id="CHEBI:140523"/>
        <dbReference type="EC" id="3.1.1.11"/>
    </reaction>
</comment>
<comment type="pathway">
    <text>Glycan metabolism; pectin degradation; 2-dehydro-3-deoxy-D-gluconate from pectin: step 1/5.</text>
</comment>
<comment type="subcellular location">
    <subcellularLocation>
        <location evidence="1">Secreted</location>
        <location evidence="1">Cell wall</location>
    </subcellularLocation>
</comment>
<comment type="tissue specificity">
    <text evidence="3">Expressed in siliques.</text>
</comment>
<comment type="developmental stage">
    <text evidence="3">Expressed during late developmental phases of siliques.</text>
</comment>
<comment type="similarity">
    <text evidence="4">Belongs to the pectinesterase family.</text>
</comment>
<organism>
    <name type="scientific">Arabidopsis thaliana</name>
    <name type="common">Mouse-ear cress</name>
    <dbReference type="NCBI Taxonomy" id="3702"/>
    <lineage>
        <taxon>Eukaryota</taxon>
        <taxon>Viridiplantae</taxon>
        <taxon>Streptophyta</taxon>
        <taxon>Embryophyta</taxon>
        <taxon>Tracheophyta</taxon>
        <taxon>Spermatophyta</taxon>
        <taxon>Magnoliopsida</taxon>
        <taxon>eudicotyledons</taxon>
        <taxon>Gunneridae</taxon>
        <taxon>Pentapetalae</taxon>
        <taxon>rosids</taxon>
        <taxon>malvids</taxon>
        <taxon>Brassicales</taxon>
        <taxon>Brassicaceae</taxon>
        <taxon>Camelineae</taxon>
        <taxon>Arabidopsis</taxon>
    </lineage>
</organism>